<feature type="chain" id="PRO_1000026136" description="ATP-dependent Clp protease proteolytic subunit">
    <location>
        <begin position="1"/>
        <end position="196"/>
    </location>
</feature>
<feature type="active site" description="Nucleophile" evidence="1">
    <location>
        <position position="96"/>
    </location>
</feature>
<feature type="active site" evidence="1">
    <location>
        <position position="121"/>
    </location>
</feature>
<accession>A4W2X9</accession>
<evidence type="ECO:0000255" key="1">
    <source>
        <dbReference type="HAMAP-Rule" id="MF_00444"/>
    </source>
</evidence>
<proteinExistence type="inferred from homology"/>
<dbReference type="EC" id="3.4.21.92" evidence="1"/>
<dbReference type="EMBL" id="CP000408">
    <property type="protein sequence ID" value="ABP92718.1"/>
    <property type="molecule type" value="Genomic_DNA"/>
</dbReference>
<dbReference type="SMR" id="A4W2X9"/>
<dbReference type="MEROPS" id="S14.001"/>
<dbReference type="KEGG" id="ssv:SSU98_1560"/>
<dbReference type="HOGENOM" id="CLU_058707_3_2_9"/>
<dbReference type="GO" id="GO:0005737">
    <property type="term" value="C:cytoplasm"/>
    <property type="evidence" value="ECO:0007669"/>
    <property type="project" value="UniProtKB-SubCell"/>
</dbReference>
<dbReference type="GO" id="GO:0009368">
    <property type="term" value="C:endopeptidase Clp complex"/>
    <property type="evidence" value="ECO:0007669"/>
    <property type="project" value="TreeGrafter"/>
</dbReference>
<dbReference type="GO" id="GO:0004176">
    <property type="term" value="F:ATP-dependent peptidase activity"/>
    <property type="evidence" value="ECO:0007669"/>
    <property type="project" value="InterPro"/>
</dbReference>
<dbReference type="GO" id="GO:0051117">
    <property type="term" value="F:ATPase binding"/>
    <property type="evidence" value="ECO:0007669"/>
    <property type="project" value="TreeGrafter"/>
</dbReference>
<dbReference type="GO" id="GO:0004252">
    <property type="term" value="F:serine-type endopeptidase activity"/>
    <property type="evidence" value="ECO:0007669"/>
    <property type="project" value="UniProtKB-UniRule"/>
</dbReference>
<dbReference type="GO" id="GO:0006515">
    <property type="term" value="P:protein quality control for misfolded or incompletely synthesized proteins"/>
    <property type="evidence" value="ECO:0007669"/>
    <property type="project" value="TreeGrafter"/>
</dbReference>
<dbReference type="CDD" id="cd07017">
    <property type="entry name" value="S14_ClpP_2"/>
    <property type="match status" value="1"/>
</dbReference>
<dbReference type="FunFam" id="3.90.226.10:FF:000014">
    <property type="entry name" value="ATP-dependent Clp protease proteolytic subunit"/>
    <property type="match status" value="1"/>
</dbReference>
<dbReference type="Gene3D" id="3.90.226.10">
    <property type="entry name" value="2-enoyl-CoA Hydratase, Chain A, domain 1"/>
    <property type="match status" value="1"/>
</dbReference>
<dbReference type="HAMAP" id="MF_00444">
    <property type="entry name" value="ClpP"/>
    <property type="match status" value="1"/>
</dbReference>
<dbReference type="InterPro" id="IPR001907">
    <property type="entry name" value="ClpP"/>
</dbReference>
<dbReference type="InterPro" id="IPR029045">
    <property type="entry name" value="ClpP/crotonase-like_dom_sf"/>
</dbReference>
<dbReference type="InterPro" id="IPR023562">
    <property type="entry name" value="ClpP/TepA"/>
</dbReference>
<dbReference type="InterPro" id="IPR033135">
    <property type="entry name" value="ClpP_His_AS"/>
</dbReference>
<dbReference type="InterPro" id="IPR018215">
    <property type="entry name" value="ClpP_Ser_AS"/>
</dbReference>
<dbReference type="NCBIfam" id="NF001368">
    <property type="entry name" value="PRK00277.1"/>
    <property type="match status" value="1"/>
</dbReference>
<dbReference type="NCBIfam" id="NF009205">
    <property type="entry name" value="PRK12553.1"/>
    <property type="match status" value="1"/>
</dbReference>
<dbReference type="PANTHER" id="PTHR10381">
    <property type="entry name" value="ATP-DEPENDENT CLP PROTEASE PROTEOLYTIC SUBUNIT"/>
    <property type="match status" value="1"/>
</dbReference>
<dbReference type="PANTHER" id="PTHR10381:SF70">
    <property type="entry name" value="ATP-DEPENDENT CLP PROTEASE PROTEOLYTIC SUBUNIT"/>
    <property type="match status" value="1"/>
</dbReference>
<dbReference type="Pfam" id="PF00574">
    <property type="entry name" value="CLP_protease"/>
    <property type="match status" value="1"/>
</dbReference>
<dbReference type="PRINTS" id="PR00127">
    <property type="entry name" value="CLPPROTEASEP"/>
</dbReference>
<dbReference type="SUPFAM" id="SSF52096">
    <property type="entry name" value="ClpP/crotonase"/>
    <property type="match status" value="1"/>
</dbReference>
<dbReference type="PROSITE" id="PS00382">
    <property type="entry name" value="CLP_PROTEASE_HIS"/>
    <property type="match status" value="1"/>
</dbReference>
<dbReference type="PROSITE" id="PS00381">
    <property type="entry name" value="CLP_PROTEASE_SER"/>
    <property type="match status" value="1"/>
</dbReference>
<keyword id="KW-0963">Cytoplasm</keyword>
<keyword id="KW-0378">Hydrolase</keyword>
<keyword id="KW-0645">Protease</keyword>
<keyword id="KW-0720">Serine protease</keyword>
<sequence>MIPVVIEQTSRGERSYDIYSRLLKDRIIMLTGPVEDNMANSIIAQLLFLDAQDPTKDIYLYVNTPGGSVSAGLAIVDTMNFIKADVQTIVMGTAASMGTIIASSGAKGKRFMLPNAEYMIHQPMGGTGGGTQQTDMAIAAEHLLKTRNKLEKILADNSGKTVKQIHKDAERDYWMSAEETLAYGFIDQIMDNTKVK</sequence>
<protein>
    <recommendedName>
        <fullName evidence="1">ATP-dependent Clp protease proteolytic subunit</fullName>
        <ecNumber evidence="1">3.4.21.92</ecNumber>
    </recommendedName>
    <alternativeName>
        <fullName evidence="1">Endopeptidase Clp</fullName>
    </alternativeName>
</protein>
<organism>
    <name type="scientific">Streptococcus suis (strain 98HAH33)</name>
    <dbReference type="NCBI Taxonomy" id="391296"/>
    <lineage>
        <taxon>Bacteria</taxon>
        <taxon>Bacillati</taxon>
        <taxon>Bacillota</taxon>
        <taxon>Bacilli</taxon>
        <taxon>Lactobacillales</taxon>
        <taxon>Streptococcaceae</taxon>
        <taxon>Streptococcus</taxon>
    </lineage>
</organism>
<name>CLPP_STRS2</name>
<gene>
    <name evidence="1" type="primary">clpP</name>
    <name type="ordered locus">SSU98_1560</name>
</gene>
<reference key="1">
    <citation type="journal article" date="2007" name="PLoS ONE">
        <title>A glimpse of streptococcal toxic shock syndrome from comparative genomics of S. suis 2 Chinese isolates.</title>
        <authorList>
            <person name="Chen C."/>
            <person name="Tang J."/>
            <person name="Dong W."/>
            <person name="Wang C."/>
            <person name="Feng Y."/>
            <person name="Wang J."/>
            <person name="Zheng F."/>
            <person name="Pan X."/>
            <person name="Liu D."/>
            <person name="Li M."/>
            <person name="Song Y."/>
            <person name="Zhu X."/>
            <person name="Sun H."/>
            <person name="Feng T."/>
            <person name="Guo Z."/>
            <person name="Ju A."/>
            <person name="Ge J."/>
            <person name="Dong Y."/>
            <person name="Sun W."/>
            <person name="Jiang Y."/>
            <person name="Wang J."/>
            <person name="Yan J."/>
            <person name="Yang H."/>
            <person name="Wang X."/>
            <person name="Gao G.F."/>
            <person name="Yang R."/>
            <person name="Wang J."/>
            <person name="Yu J."/>
        </authorList>
    </citation>
    <scope>NUCLEOTIDE SEQUENCE [LARGE SCALE GENOMIC DNA]</scope>
    <source>
        <strain>98HAH33</strain>
    </source>
</reference>
<comment type="function">
    <text evidence="1">Cleaves peptides in various proteins in a process that requires ATP hydrolysis. Has a chymotrypsin-like activity. Plays a major role in the degradation of misfolded proteins.</text>
</comment>
<comment type="catalytic activity">
    <reaction evidence="1">
        <text>Hydrolysis of proteins to small peptides in the presence of ATP and magnesium. alpha-casein is the usual test substrate. In the absence of ATP, only oligopeptides shorter than five residues are hydrolyzed (such as succinyl-Leu-Tyr-|-NHMec, and Leu-Tyr-Leu-|-Tyr-Trp, in which cleavage of the -Tyr-|-Leu- and -Tyr-|-Trp bonds also occurs).</text>
        <dbReference type="EC" id="3.4.21.92"/>
    </reaction>
</comment>
<comment type="subunit">
    <text evidence="1">Fourteen ClpP subunits assemble into 2 heptameric rings which stack back to back to give a disk-like structure with a central cavity, resembling the structure of eukaryotic proteasomes.</text>
</comment>
<comment type="subcellular location">
    <subcellularLocation>
        <location evidence="1">Cytoplasm</location>
    </subcellularLocation>
</comment>
<comment type="similarity">
    <text evidence="1">Belongs to the peptidase S14 family.</text>
</comment>